<feature type="chain" id="PRO_0000176403" description="Asparagine--tRNA ligase">
    <location>
        <begin position="1"/>
        <end position="463"/>
    </location>
</feature>
<gene>
    <name evidence="1" type="primary">asnS</name>
    <name type="ordered locus">CTC_00143</name>
</gene>
<accession>Q899M9</accession>
<keyword id="KW-0030">Aminoacyl-tRNA synthetase</keyword>
<keyword id="KW-0067">ATP-binding</keyword>
<keyword id="KW-0963">Cytoplasm</keyword>
<keyword id="KW-0436">Ligase</keyword>
<keyword id="KW-0547">Nucleotide-binding</keyword>
<keyword id="KW-0648">Protein biosynthesis</keyword>
<keyword id="KW-1185">Reference proteome</keyword>
<protein>
    <recommendedName>
        <fullName evidence="1">Asparagine--tRNA ligase</fullName>
        <ecNumber evidence="1">6.1.1.22</ecNumber>
    </recommendedName>
    <alternativeName>
        <fullName evidence="1">Asparaginyl-tRNA synthetase</fullName>
        <shortName evidence="1">AsnRS</shortName>
    </alternativeName>
</protein>
<reference key="1">
    <citation type="journal article" date="2003" name="Proc. Natl. Acad. Sci. U.S.A.">
        <title>The genome sequence of Clostridium tetani, the causative agent of tetanus disease.</title>
        <authorList>
            <person name="Brueggemann H."/>
            <person name="Baeumer S."/>
            <person name="Fricke W.F."/>
            <person name="Wiezer A."/>
            <person name="Liesegang H."/>
            <person name="Decker I."/>
            <person name="Herzberg C."/>
            <person name="Martinez-Arias R."/>
            <person name="Merkl R."/>
            <person name="Henne A."/>
            <person name="Gottschalk G."/>
        </authorList>
    </citation>
    <scope>NUCLEOTIDE SEQUENCE [LARGE SCALE GENOMIC DNA]</scope>
    <source>
        <strain>Massachusetts / E88</strain>
    </source>
</reference>
<sequence length="463" mass="53370">MKKISIKQLYREPEKFINKDIVVAGWIRTERTSKNFGFIELNDGSFFKNLQIIIDTNLDNFDKVSKLPISSSIVVEGKLVATPSAKQPFEVQASKVTVEGTSLQDYPLQKKRHSFEFLRSIAHLRPRSNTFSAVFRIRSLAAYAVHKFFQEKNFVYVHTPIITASDCEGAGEMFRVTTLDLNNIPKNDEGKIDFSQDFFDKDAKLTVSGQLSAESYALAFGNVYTFGPTFRAENSNTARHASEFWMIEPEMAFADLTDYMDVAEEMVKYIINYVLENAPEEMNFFNSFIDKDLFKRLDNVVNSEFKRITYTEAVDLLQKSGEKFQYPVEWGIDLQTEHERYITEKIFGKPVFVTDYPKDIKAFYMRLNEDNKTVAAADLLVPGVGEIIGGSQREERLDVLEERMKEFDLNEKDYWWYLELRKYGSAKHSGFGLGFERILMYMTGISNIRDVIPFPRTPGSAEF</sequence>
<evidence type="ECO:0000255" key="1">
    <source>
        <dbReference type="HAMAP-Rule" id="MF_00534"/>
    </source>
</evidence>
<comment type="catalytic activity">
    <reaction evidence="1">
        <text>tRNA(Asn) + L-asparagine + ATP = L-asparaginyl-tRNA(Asn) + AMP + diphosphate + H(+)</text>
        <dbReference type="Rhea" id="RHEA:11180"/>
        <dbReference type="Rhea" id="RHEA-COMP:9659"/>
        <dbReference type="Rhea" id="RHEA-COMP:9674"/>
        <dbReference type="ChEBI" id="CHEBI:15378"/>
        <dbReference type="ChEBI" id="CHEBI:30616"/>
        <dbReference type="ChEBI" id="CHEBI:33019"/>
        <dbReference type="ChEBI" id="CHEBI:58048"/>
        <dbReference type="ChEBI" id="CHEBI:78442"/>
        <dbReference type="ChEBI" id="CHEBI:78515"/>
        <dbReference type="ChEBI" id="CHEBI:456215"/>
        <dbReference type="EC" id="6.1.1.22"/>
    </reaction>
</comment>
<comment type="subunit">
    <text evidence="1">Homodimer.</text>
</comment>
<comment type="subcellular location">
    <subcellularLocation>
        <location evidence="1">Cytoplasm</location>
    </subcellularLocation>
</comment>
<comment type="similarity">
    <text evidence="1">Belongs to the class-II aminoacyl-tRNA synthetase family.</text>
</comment>
<organism>
    <name type="scientific">Clostridium tetani (strain Massachusetts / E88)</name>
    <dbReference type="NCBI Taxonomy" id="212717"/>
    <lineage>
        <taxon>Bacteria</taxon>
        <taxon>Bacillati</taxon>
        <taxon>Bacillota</taxon>
        <taxon>Clostridia</taxon>
        <taxon>Eubacteriales</taxon>
        <taxon>Clostridiaceae</taxon>
        <taxon>Clostridium</taxon>
    </lineage>
</organism>
<proteinExistence type="inferred from homology"/>
<name>SYN_CLOTE</name>
<dbReference type="EC" id="6.1.1.22" evidence="1"/>
<dbReference type="EMBL" id="AE015927">
    <property type="protein sequence ID" value="AAO34795.1"/>
    <property type="molecule type" value="Genomic_DNA"/>
</dbReference>
<dbReference type="RefSeq" id="WP_011098467.1">
    <property type="nucleotide sequence ID" value="NC_004557.1"/>
</dbReference>
<dbReference type="SMR" id="Q899M9"/>
<dbReference type="STRING" id="212717.CTC_00143"/>
<dbReference type="GeneID" id="24252754"/>
<dbReference type="KEGG" id="ctc:CTC_00143"/>
<dbReference type="HOGENOM" id="CLU_004553_2_0_9"/>
<dbReference type="OrthoDB" id="9762036at2"/>
<dbReference type="Proteomes" id="UP000001412">
    <property type="component" value="Chromosome"/>
</dbReference>
<dbReference type="GO" id="GO:0005737">
    <property type="term" value="C:cytoplasm"/>
    <property type="evidence" value="ECO:0007669"/>
    <property type="project" value="UniProtKB-SubCell"/>
</dbReference>
<dbReference type="GO" id="GO:0004816">
    <property type="term" value="F:asparagine-tRNA ligase activity"/>
    <property type="evidence" value="ECO:0007669"/>
    <property type="project" value="UniProtKB-UniRule"/>
</dbReference>
<dbReference type="GO" id="GO:0005524">
    <property type="term" value="F:ATP binding"/>
    <property type="evidence" value="ECO:0007669"/>
    <property type="project" value="UniProtKB-UniRule"/>
</dbReference>
<dbReference type="GO" id="GO:0140096">
    <property type="term" value="F:catalytic activity, acting on a protein"/>
    <property type="evidence" value="ECO:0007669"/>
    <property type="project" value="UniProtKB-ARBA"/>
</dbReference>
<dbReference type="GO" id="GO:0003676">
    <property type="term" value="F:nucleic acid binding"/>
    <property type="evidence" value="ECO:0007669"/>
    <property type="project" value="InterPro"/>
</dbReference>
<dbReference type="GO" id="GO:0016740">
    <property type="term" value="F:transferase activity"/>
    <property type="evidence" value="ECO:0007669"/>
    <property type="project" value="UniProtKB-ARBA"/>
</dbReference>
<dbReference type="GO" id="GO:0006421">
    <property type="term" value="P:asparaginyl-tRNA aminoacylation"/>
    <property type="evidence" value="ECO:0007669"/>
    <property type="project" value="UniProtKB-UniRule"/>
</dbReference>
<dbReference type="CDD" id="cd00776">
    <property type="entry name" value="AsxRS_core"/>
    <property type="match status" value="1"/>
</dbReference>
<dbReference type="CDD" id="cd04318">
    <property type="entry name" value="EcAsnRS_like_N"/>
    <property type="match status" value="1"/>
</dbReference>
<dbReference type="FunFam" id="3.30.930.10:FF:000016">
    <property type="entry name" value="Asparagine--tRNA ligase"/>
    <property type="match status" value="1"/>
</dbReference>
<dbReference type="Gene3D" id="3.30.930.10">
    <property type="entry name" value="Bira Bifunctional Protein, Domain 2"/>
    <property type="match status" value="1"/>
</dbReference>
<dbReference type="Gene3D" id="2.40.50.140">
    <property type="entry name" value="Nucleic acid-binding proteins"/>
    <property type="match status" value="1"/>
</dbReference>
<dbReference type="HAMAP" id="MF_00534">
    <property type="entry name" value="Asn_tRNA_synth"/>
    <property type="match status" value="1"/>
</dbReference>
<dbReference type="InterPro" id="IPR004364">
    <property type="entry name" value="Aa-tRNA-synt_II"/>
</dbReference>
<dbReference type="InterPro" id="IPR006195">
    <property type="entry name" value="aa-tRNA-synth_II"/>
</dbReference>
<dbReference type="InterPro" id="IPR045864">
    <property type="entry name" value="aa-tRNA-synth_II/BPL/LPL"/>
</dbReference>
<dbReference type="InterPro" id="IPR004522">
    <property type="entry name" value="Asn-tRNA-ligase"/>
</dbReference>
<dbReference type="InterPro" id="IPR002312">
    <property type="entry name" value="Asp/Asn-tRNA-synth_IIb"/>
</dbReference>
<dbReference type="InterPro" id="IPR012340">
    <property type="entry name" value="NA-bd_OB-fold"/>
</dbReference>
<dbReference type="InterPro" id="IPR004365">
    <property type="entry name" value="NA-bd_OB_tRNA"/>
</dbReference>
<dbReference type="NCBIfam" id="TIGR00457">
    <property type="entry name" value="asnS"/>
    <property type="match status" value="1"/>
</dbReference>
<dbReference type="NCBIfam" id="NF003037">
    <property type="entry name" value="PRK03932.1"/>
    <property type="match status" value="1"/>
</dbReference>
<dbReference type="PANTHER" id="PTHR22594:SF34">
    <property type="entry name" value="ASPARAGINE--TRNA LIGASE, MITOCHONDRIAL-RELATED"/>
    <property type="match status" value="1"/>
</dbReference>
<dbReference type="PANTHER" id="PTHR22594">
    <property type="entry name" value="ASPARTYL/LYSYL-TRNA SYNTHETASE"/>
    <property type="match status" value="1"/>
</dbReference>
<dbReference type="Pfam" id="PF00152">
    <property type="entry name" value="tRNA-synt_2"/>
    <property type="match status" value="1"/>
</dbReference>
<dbReference type="Pfam" id="PF01336">
    <property type="entry name" value="tRNA_anti-codon"/>
    <property type="match status" value="1"/>
</dbReference>
<dbReference type="PRINTS" id="PR01042">
    <property type="entry name" value="TRNASYNTHASP"/>
</dbReference>
<dbReference type="SUPFAM" id="SSF55681">
    <property type="entry name" value="Class II aaRS and biotin synthetases"/>
    <property type="match status" value="1"/>
</dbReference>
<dbReference type="SUPFAM" id="SSF50249">
    <property type="entry name" value="Nucleic acid-binding proteins"/>
    <property type="match status" value="1"/>
</dbReference>
<dbReference type="PROSITE" id="PS50862">
    <property type="entry name" value="AA_TRNA_LIGASE_II"/>
    <property type="match status" value="1"/>
</dbReference>